<dbReference type="EMBL" id="CP000469">
    <property type="protein sequence ID" value="ABK46432.1"/>
    <property type="molecule type" value="Genomic_DNA"/>
</dbReference>
<dbReference type="RefSeq" id="WP_011621019.1">
    <property type="nucleotide sequence ID" value="NC_008577.1"/>
</dbReference>
<dbReference type="SMR" id="A0KRL3"/>
<dbReference type="STRING" id="94122.Shewana3_0188"/>
<dbReference type="GeneID" id="94726175"/>
<dbReference type="KEGG" id="shn:Shewana3_0188"/>
<dbReference type="eggNOG" id="COG0080">
    <property type="taxonomic scope" value="Bacteria"/>
</dbReference>
<dbReference type="HOGENOM" id="CLU_074237_2_0_6"/>
<dbReference type="OrthoDB" id="9802408at2"/>
<dbReference type="Proteomes" id="UP000002589">
    <property type="component" value="Chromosome"/>
</dbReference>
<dbReference type="GO" id="GO:0022625">
    <property type="term" value="C:cytosolic large ribosomal subunit"/>
    <property type="evidence" value="ECO:0007669"/>
    <property type="project" value="TreeGrafter"/>
</dbReference>
<dbReference type="GO" id="GO:0070180">
    <property type="term" value="F:large ribosomal subunit rRNA binding"/>
    <property type="evidence" value="ECO:0007669"/>
    <property type="project" value="UniProtKB-UniRule"/>
</dbReference>
<dbReference type="GO" id="GO:0003735">
    <property type="term" value="F:structural constituent of ribosome"/>
    <property type="evidence" value="ECO:0007669"/>
    <property type="project" value="InterPro"/>
</dbReference>
<dbReference type="GO" id="GO:0006412">
    <property type="term" value="P:translation"/>
    <property type="evidence" value="ECO:0007669"/>
    <property type="project" value="UniProtKB-UniRule"/>
</dbReference>
<dbReference type="CDD" id="cd00349">
    <property type="entry name" value="Ribosomal_L11"/>
    <property type="match status" value="1"/>
</dbReference>
<dbReference type="FunFam" id="1.10.10.250:FF:000001">
    <property type="entry name" value="50S ribosomal protein L11"/>
    <property type="match status" value="1"/>
</dbReference>
<dbReference type="FunFam" id="3.30.1550.10:FF:000001">
    <property type="entry name" value="50S ribosomal protein L11"/>
    <property type="match status" value="1"/>
</dbReference>
<dbReference type="Gene3D" id="1.10.10.250">
    <property type="entry name" value="Ribosomal protein L11, C-terminal domain"/>
    <property type="match status" value="1"/>
</dbReference>
<dbReference type="Gene3D" id="3.30.1550.10">
    <property type="entry name" value="Ribosomal protein L11/L12, N-terminal domain"/>
    <property type="match status" value="1"/>
</dbReference>
<dbReference type="HAMAP" id="MF_00736">
    <property type="entry name" value="Ribosomal_uL11"/>
    <property type="match status" value="1"/>
</dbReference>
<dbReference type="InterPro" id="IPR000911">
    <property type="entry name" value="Ribosomal_uL11"/>
</dbReference>
<dbReference type="InterPro" id="IPR006519">
    <property type="entry name" value="Ribosomal_uL11_bac-typ"/>
</dbReference>
<dbReference type="InterPro" id="IPR020783">
    <property type="entry name" value="Ribosomal_uL11_C"/>
</dbReference>
<dbReference type="InterPro" id="IPR036769">
    <property type="entry name" value="Ribosomal_uL11_C_sf"/>
</dbReference>
<dbReference type="InterPro" id="IPR020785">
    <property type="entry name" value="Ribosomal_uL11_CS"/>
</dbReference>
<dbReference type="InterPro" id="IPR020784">
    <property type="entry name" value="Ribosomal_uL11_N"/>
</dbReference>
<dbReference type="InterPro" id="IPR036796">
    <property type="entry name" value="Ribosomal_uL11_N_sf"/>
</dbReference>
<dbReference type="NCBIfam" id="TIGR01632">
    <property type="entry name" value="L11_bact"/>
    <property type="match status" value="1"/>
</dbReference>
<dbReference type="PANTHER" id="PTHR11661">
    <property type="entry name" value="60S RIBOSOMAL PROTEIN L12"/>
    <property type="match status" value="1"/>
</dbReference>
<dbReference type="PANTHER" id="PTHR11661:SF1">
    <property type="entry name" value="LARGE RIBOSOMAL SUBUNIT PROTEIN UL11M"/>
    <property type="match status" value="1"/>
</dbReference>
<dbReference type="Pfam" id="PF00298">
    <property type="entry name" value="Ribosomal_L11"/>
    <property type="match status" value="1"/>
</dbReference>
<dbReference type="Pfam" id="PF03946">
    <property type="entry name" value="Ribosomal_L11_N"/>
    <property type="match status" value="1"/>
</dbReference>
<dbReference type="SMART" id="SM00649">
    <property type="entry name" value="RL11"/>
    <property type="match status" value="1"/>
</dbReference>
<dbReference type="SUPFAM" id="SSF54747">
    <property type="entry name" value="Ribosomal L11/L12e N-terminal domain"/>
    <property type="match status" value="1"/>
</dbReference>
<dbReference type="SUPFAM" id="SSF46906">
    <property type="entry name" value="Ribosomal protein L11, C-terminal domain"/>
    <property type="match status" value="1"/>
</dbReference>
<dbReference type="PROSITE" id="PS00359">
    <property type="entry name" value="RIBOSOMAL_L11"/>
    <property type="match status" value="1"/>
</dbReference>
<reference key="1">
    <citation type="submission" date="2006-09" db="EMBL/GenBank/DDBJ databases">
        <title>Complete sequence of chromosome 1 of Shewanella sp. ANA-3.</title>
        <authorList>
            <person name="Copeland A."/>
            <person name="Lucas S."/>
            <person name="Lapidus A."/>
            <person name="Barry K."/>
            <person name="Detter J.C."/>
            <person name="Glavina del Rio T."/>
            <person name="Hammon N."/>
            <person name="Israni S."/>
            <person name="Dalin E."/>
            <person name="Tice H."/>
            <person name="Pitluck S."/>
            <person name="Chertkov O."/>
            <person name="Brettin T."/>
            <person name="Bruce D."/>
            <person name="Han C."/>
            <person name="Tapia R."/>
            <person name="Gilna P."/>
            <person name="Schmutz J."/>
            <person name="Larimer F."/>
            <person name="Land M."/>
            <person name="Hauser L."/>
            <person name="Kyrpides N."/>
            <person name="Kim E."/>
            <person name="Newman D."/>
            <person name="Salticov C."/>
            <person name="Konstantinidis K."/>
            <person name="Klappenback J."/>
            <person name="Tiedje J."/>
            <person name="Richardson P."/>
        </authorList>
    </citation>
    <scope>NUCLEOTIDE SEQUENCE [LARGE SCALE GENOMIC DNA]</scope>
    <source>
        <strain>ANA-3</strain>
    </source>
</reference>
<comment type="function">
    <text evidence="1">Forms part of the ribosomal stalk which helps the ribosome interact with GTP-bound translation factors.</text>
</comment>
<comment type="subunit">
    <text evidence="1">Part of the ribosomal stalk of the 50S ribosomal subunit. Interacts with L10 and the large rRNA to form the base of the stalk. L10 forms an elongated spine to which L12 dimers bind in a sequential fashion forming a multimeric L10(L12)X complex.</text>
</comment>
<comment type="PTM">
    <text evidence="1">One or more lysine residues are methylated.</text>
</comment>
<comment type="similarity">
    <text evidence="1">Belongs to the universal ribosomal protein uL11 family.</text>
</comment>
<feature type="chain" id="PRO_1000046265" description="Large ribosomal subunit protein uL11">
    <location>
        <begin position="1"/>
        <end position="142"/>
    </location>
</feature>
<evidence type="ECO:0000255" key="1">
    <source>
        <dbReference type="HAMAP-Rule" id="MF_00736"/>
    </source>
</evidence>
<evidence type="ECO:0000305" key="2"/>
<name>RL11_SHESA</name>
<sequence length="142" mass="15090">MAKKIDAYIKLQVKSGSANPSPPVGPALGQKGVNIMEFCKAFNARTEKMEKGMPIPVVITVYSDRSFTFETKTPPASYLLKTAAGLKSGSPRPNTQKVGTIARAKIQEIAELKAADMTGADVEAMTRSIEGTARSMGLVVEG</sequence>
<protein>
    <recommendedName>
        <fullName evidence="1">Large ribosomal subunit protein uL11</fullName>
    </recommendedName>
    <alternativeName>
        <fullName evidence="2">50S ribosomal protein L11</fullName>
    </alternativeName>
</protein>
<proteinExistence type="inferred from homology"/>
<keyword id="KW-0488">Methylation</keyword>
<keyword id="KW-0687">Ribonucleoprotein</keyword>
<keyword id="KW-0689">Ribosomal protein</keyword>
<keyword id="KW-0694">RNA-binding</keyword>
<keyword id="KW-0699">rRNA-binding</keyword>
<organism>
    <name type="scientific">Shewanella sp. (strain ANA-3)</name>
    <dbReference type="NCBI Taxonomy" id="94122"/>
    <lineage>
        <taxon>Bacteria</taxon>
        <taxon>Pseudomonadati</taxon>
        <taxon>Pseudomonadota</taxon>
        <taxon>Gammaproteobacteria</taxon>
        <taxon>Alteromonadales</taxon>
        <taxon>Shewanellaceae</taxon>
        <taxon>Shewanella</taxon>
    </lineage>
</organism>
<accession>A0KRL3</accession>
<gene>
    <name evidence="1" type="primary">rplK</name>
    <name type="ordered locus">Shewana3_0188</name>
</gene>